<gene>
    <name evidence="1" type="primary">glyA</name>
    <name type="ordered locus">FTL_0703</name>
</gene>
<protein>
    <recommendedName>
        <fullName evidence="1">Serine hydroxymethyltransferase</fullName>
        <shortName evidence="1">SHMT</shortName>
        <shortName evidence="1">Serine methylase</shortName>
        <ecNumber evidence="1">2.1.2.1</ecNumber>
    </recommendedName>
</protein>
<sequence>MFSFEKNSLKNTDKEIFDAIELEVKRQHEHVELIASENYASPAVMEAQGSQLTNKYAEGYHGKRYYGGCEFVDIAEKLAIERAQQLFGVDYANVQPHSGSQANAAVYNAVLKPGDTVLGMDLGAGGHLTHGSKVNFSGKIYNSIQYGLDENGDIDYEQVAQLAKEHKPKMIIAGFSAFSGIINWQKFREIADSVDAVLMADIAHVAGLVAAGVYPNPFPYVYVATTTTHKTLRGPRGGLILCNNNPELAKKFQSAIFPGIQGGPLMHVIAAKAVAFKEALEPSFVDYQKQVLKNAKAMEKVLKQRGINIISGGTSNHLLLLDITNTGFSGKEAEAALGRANITVNKNSIPNDPRSPFVTSGLRIGSPAITTRGFKEKECELVANLLADVVFNCGDEKVENETAAKVLDLCDKLPVYK</sequence>
<proteinExistence type="inferred from homology"/>
<comment type="function">
    <text evidence="1">Catalyzes the reversible interconversion of serine and glycine with tetrahydrofolate (THF) serving as the one-carbon carrier. This reaction serves as the major source of one-carbon groups required for the biosynthesis of purines, thymidylate, methionine, and other important biomolecules. Also exhibits THF-independent aldolase activity toward beta-hydroxyamino acids, producing glycine and aldehydes, via a retro-aldol mechanism.</text>
</comment>
<comment type="catalytic activity">
    <reaction evidence="1">
        <text>(6R)-5,10-methylene-5,6,7,8-tetrahydrofolate + glycine + H2O = (6S)-5,6,7,8-tetrahydrofolate + L-serine</text>
        <dbReference type="Rhea" id="RHEA:15481"/>
        <dbReference type="ChEBI" id="CHEBI:15377"/>
        <dbReference type="ChEBI" id="CHEBI:15636"/>
        <dbReference type="ChEBI" id="CHEBI:33384"/>
        <dbReference type="ChEBI" id="CHEBI:57305"/>
        <dbReference type="ChEBI" id="CHEBI:57453"/>
        <dbReference type="EC" id="2.1.2.1"/>
    </reaction>
</comment>
<comment type="cofactor">
    <cofactor evidence="1">
        <name>pyridoxal 5'-phosphate</name>
        <dbReference type="ChEBI" id="CHEBI:597326"/>
    </cofactor>
</comment>
<comment type="pathway">
    <text evidence="1">One-carbon metabolism; tetrahydrofolate interconversion.</text>
</comment>
<comment type="pathway">
    <text evidence="1">Amino-acid biosynthesis; glycine biosynthesis; glycine from L-serine: step 1/1.</text>
</comment>
<comment type="subunit">
    <text evidence="1">Homodimer.</text>
</comment>
<comment type="subcellular location">
    <subcellularLocation>
        <location evidence="1">Cytoplasm</location>
    </subcellularLocation>
</comment>
<comment type="similarity">
    <text evidence="1">Belongs to the SHMT family.</text>
</comment>
<feature type="chain" id="PRO_1000006252" description="Serine hydroxymethyltransferase">
    <location>
        <begin position="1"/>
        <end position="417"/>
    </location>
</feature>
<feature type="binding site" evidence="1">
    <location>
        <position position="122"/>
    </location>
    <ligand>
        <name>(6S)-5,6,7,8-tetrahydrofolate</name>
        <dbReference type="ChEBI" id="CHEBI:57453"/>
    </ligand>
</feature>
<feature type="binding site" evidence="1">
    <location>
        <begin position="126"/>
        <end position="128"/>
    </location>
    <ligand>
        <name>(6S)-5,6,7,8-tetrahydrofolate</name>
        <dbReference type="ChEBI" id="CHEBI:57453"/>
    </ligand>
</feature>
<feature type="binding site" evidence="1">
    <location>
        <begin position="355"/>
        <end position="357"/>
    </location>
    <ligand>
        <name>(6S)-5,6,7,8-tetrahydrofolate</name>
        <dbReference type="ChEBI" id="CHEBI:57453"/>
    </ligand>
</feature>
<feature type="site" description="Plays an important role in substrate specificity" evidence="1">
    <location>
        <position position="229"/>
    </location>
</feature>
<feature type="modified residue" description="N6-(pyridoxal phosphate)lysine" evidence="1">
    <location>
        <position position="230"/>
    </location>
</feature>
<name>GLYA_FRATH</name>
<reference key="1">
    <citation type="submission" date="2006-03" db="EMBL/GenBank/DDBJ databases">
        <title>Complete genome sequence of Francisella tularensis LVS (Live Vaccine Strain).</title>
        <authorList>
            <person name="Chain P."/>
            <person name="Larimer F."/>
            <person name="Land M."/>
            <person name="Stilwagen S."/>
            <person name="Larsson P."/>
            <person name="Bearden S."/>
            <person name="Chu M."/>
            <person name="Oyston P."/>
            <person name="Forsman M."/>
            <person name="Andersson S."/>
            <person name="Lindler L."/>
            <person name="Titball R."/>
            <person name="Garcia E."/>
        </authorList>
    </citation>
    <scope>NUCLEOTIDE SEQUENCE [LARGE SCALE GENOMIC DNA]</scope>
    <source>
        <strain>LVS</strain>
    </source>
</reference>
<organism>
    <name type="scientific">Francisella tularensis subsp. holarctica (strain LVS)</name>
    <dbReference type="NCBI Taxonomy" id="376619"/>
    <lineage>
        <taxon>Bacteria</taxon>
        <taxon>Pseudomonadati</taxon>
        <taxon>Pseudomonadota</taxon>
        <taxon>Gammaproteobacteria</taxon>
        <taxon>Thiotrichales</taxon>
        <taxon>Francisellaceae</taxon>
        <taxon>Francisella</taxon>
    </lineage>
</organism>
<keyword id="KW-0028">Amino-acid biosynthesis</keyword>
<keyword id="KW-0963">Cytoplasm</keyword>
<keyword id="KW-0554">One-carbon metabolism</keyword>
<keyword id="KW-0663">Pyridoxal phosphate</keyword>
<keyword id="KW-1185">Reference proteome</keyword>
<keyword id="KW-0808">Transferase</keyword>
<accession>Q2A498</accession>
<evidence type="ECO:0000255" key="1">
    <source>
        <dbReference type="HAMAP-Rule" id="MF_00051"/>
    </source>
</evidence>
<dbReference type="EC" id="2.1.2.1" evidence="1"/>
<dbReference type="EMBL" id="AM233362">
    <property type="protein sequence ID" value="CAJ79142.1"/>
    <property type="molecule type" value="Genomic_DNA"/>
</dbReference>
<dbReference type="RefSeq" id="WP_003015178.1">
    <property type="nucleotide sequence ID" value="NZ_CP009694.1"/>
</dbReference>
<dbReference type="SMR" id="Q2A498"/>
<dbReference type="KEGG" id="ftl:FTL_0703"/>
<dbReference type="UniPathway" id="UPA00193"/>
<dbReference type="UniPathway" id="UPA00288">
    <property type="reaction ID" value="UER01023"/>
</dbReference>
<dbReference type="Proteomes" id="UP000001944">
    <property type="component" value="Chromosome"/>
</dbReference>
<dbReference type="GO" id="GO:0005829">
    <property type="term" value="C:cytosol"/>
    <property type="evidence" value="ECO:0007669"/>
    <property type="project" value="TreeGrafter"/>
</dbReference>
<dbReference type="GO" id="GO:0004372">
    <property type="term" value="F:glycine hydroxymethyltransferase activity"/>
    <property type="evidence" value="ECO:0007669"/>
    <property type="project" value="UniProtKB-UniRule"/>
</dbReference>
<dbReference type="GO" id="GO:0030170">
    <property type="term" value="F:pyridoxal phosphate binding"/>
    <property type="evidence" value="ECO:0007669"/>
    <property type="project" value="UniProtKB-UniRule"/>
</dbReference>
<dbReference type="GO" id="GO:0019264">
    <property type="term" value="P:glycine biosynthetic process from serine"/>
    <property type="evidence" value="ECO:0007669"/>
    <property type="project" value="UniProtKB-UniRule"/>
</dbReference>
<dbReference type="GO" id="GO:0035999">
    <property type="term" value="P:tetrahydrofolate interconversion"/>
    <property type="evidence" value="ECO:0007669"/>
    <property type="project" value="UniProtKB-UniRule"/>
</dbReference>
<dbReference type="CDD" id="cd00378">
    <property type="entry name" value="SHMT"/>
    <property type="match status" value="1"/>
</dbReference>
<dbReference type="FunFam" id="3.40.640.10:FF:000001">
    <property type="entry name" value="Serine hydroxymethyltransferase"/>
    <property type="match status" value="1"/>
</dbReference>
<dbReference type="FunFam" id="3.90.1150.10:FF:000003">
    <property type="entry name" value="Serine hydroxymethyltransferase"/>
    <property type="match status" value="1"/>
</dbReference>
<dbReference type="Gene3D" id="3.90.1150.10">
    <property type="entry name" value="Aspartate Aminotransferase, domain 1"/>
    <property type="match status" value="1"/>
</dbReference>
<dbReference type="Gene3D" id="3.40.640.10">
    <property type="entry name" value="Type I PLP-dependent aspartate aminotransferase-like (Major domain)"/>
    <property type="match status" value="1"/>
</dbReference>
<dbReference type="HAMAP" id="MF_00051">
    <property type="entry name" value="SHMT"/>
    <property type="match status" value="1"/>
</dbReference>
<dbReference type="InterPro" id="IPR015424">
    <property type="entry name" value="PyrdxlP-dep_Trfase"/>
</dbReference>
<dbReference type="InterPro" id="IPR015421">
    <property type="entry name" value="PyrdxlP-dep_Trfase_major"/>
</dbReference>
<dbReference type="InterPro" id="IPR015422">
    <property type="entry name" value="PyrdxlP-dep_Trfase_small"/>
</dbReference>
<dbReference type="InterPro" id="IPR001085">
    <property type="entry name" value="Ser_HO-MeTrfase"/>
</dbReference>
<dbReference type="InterPro" id="IPR049943">
    <property type="entry name" value="Ser_HO-MeTrfase-like"/>
</dbReference>
<dbReference type="InterPro" id="IPR019798">
    <property type="entry name" value="Ser_HO-MeTrfase_PLP_BS"/>
</dbReference>
<dbReference type="InterPro" id="IPR039429">
    <property type="entry name" value="SHMT-like_dom"/>
</dbReference>
<dbReference type="NCBIfam" id="NF000586">
    <property type="entry name" value="PRK00011.1"/>
    <property type="match status" value="1"/>
</dbReference>
<dbReference type="PANTHER" id="PTHR11680">
    <property type="entry name" value="SERINE HYDROXYMETHYLTRANSFERASE"/>
    <property type="match status" value="1"/>
</dbReference>
<dbReference type="PANTHER" id="PTHR11680:SF50">
    <property type="entry name" value="SERINE HYDROXYMETHYLTRANSFERASE"/>
    <property type="match status" value="1"/>
</dbReference>
<dbReference type="Pfam" id="PF00464">
    <property type="entry name" value="SHMT"/>
    <property type="match status" value="1"/>
</dbReference>
<dbReference type="PIRSF" id="PIRSF000412">
    <property type="entry name" value="SHMT"/>
    <property type="match status" value="1"/>
</dbReference>
<dbReference type="SUPFAM" id="SSF53383">
    <property type="entry name" value="PLP-dependent transferases"/>
    <property type="match status" value="1"/>
</dbReference>
<dbReference type="PROSITE" id="PS00096">
    <property type="entry name" value="SHMT"/>
    <property type="match status" value="1"/>
</dbReference>